<reference key="1">
    <citation type="submission" date="2008-10" db="EMBL/GenBank/DDBJ databases">
        <title>Genome sequence of Bacillus cereus G9842.</title>
        <authorList>
            <person name="Dodson R.J."/>
            <person name="Durkin A.S."/>
            <person name="Rosovitz M.J."/>
            <person name="Rasko D.A."/>
            <person name="Hoffmaster A."/>
            <person name="Ravel J."/>
            <person name="Sutton G."/>
        </authorList>
    </citation>
    <scope>NUCLEOTIDE SEQUENCE [LARGE SCALE GENOMIC DNA]</scope>
    <source>
        <strain>G9842</strain>
    </source>
</reference>
<gene>
    <name evidence="1" type="primary">lspA</name>
    <name type="ordered locus">BCG9842_B1247</name>
</gene>
<comment type="function">
    <text evidence="1">This protein specifically catalyzes the removal of signal peptides from prolipoproteins.</text>
</comment>
<comment type="catalytic activity">
    <reaction evidence="1">
        <text>Release of signal peptides from bacterial membrane prolipoproteins. Hydrolyzes -Xaa-Yaa-Zaa-|-(S,diacylglyceryl)Cys-, in which Xaa is hydrophobic (preferably Leu), and Yaa (Ala or Ser) and Zaa (Gly or Ala) have small, neutral side chains.</text>
        <dbReference type="EC" id="3.4.23.36"/>
    </reaction>
</comment>
<comment type="pathway">
    <text evidence="1">Protein modification; lipoprotein biosynthesis (signal peptide cleavage).</text>
</comment>
<comment type="subcellular location">
    <subcellularLocation>
        <location evidence="1">Cell membrane</location>
        <topology evidence="1">Multi-pass membrane protein</topology>
    </subcellularLocation>
</comment>
<comment type="similarity">
    <text evidence="1">Belongs to the peptidase A8 family.</text>
</comment>
<proteinExistence type="inferred from homology"/>
<sequence length="152" mass="17424">MIYYVIALFVIAIDQISKWLIVKNMELGTSIPIIDNVLYITSHRNRGAAWGILENKMWFFYIITVVFVVFIVFYMKKYAKTDKLLGISLGLILGGAIGNFIDRVFRQEVVDFIHVYIFSYNYPVFNIADSALCIGVVLIIIQTLLEGKKAKE</sequence>
<protein>
    <recommendedName>
        <fullName evidence="1">Lipoprotein signal peptidase</fullName>
        <ecNumber evidence="1">3.4.23.36</ecNumber>
    </recommendedName>
    <alternativeName>
        <fullName evidence="1">Prolipoprotein signal peptidase</fullName>
    </alternativeName>
    <alternativeName>
        <fullName evidence="1">Signal peptidase II</fullName>
        <shortName evidence="1">SPase II</shortName>
    </alternativeName>
</protein>
<organism>
    <name type="scientific">Bacillus cereus (strain G9842)</name>
    <dbReference type="NCBI Taxonomy" id="405531"/>
    <lineage>
        <taxon>Bacteria</taxon>
        <taxon>Bacillati</taxon>
        <taxon>Bacillota</taxon>
        <taxon>Bacilli</taxon>
        <taxon>Bacillales</taxon>
        <taxon>Bacillaceae</taxon>
        <taxon>Bacillus</taxon>
        <taxon>Bacillus cereus group</taxon>
    </lineage>
</organism>
<accession>B7IUQ3</accession>
<feature type="chain" id="PRO_1000190791" description="Lipoprotein signal peptidase">
    <location>
        <begin position="1"/>
        <end position="152"/>
    </location>
</feature>
<feature type="transmembrane region" description="Helical" evidence="1">
    <location>
        <begin position="55"/>
        <end position="75"/>
    </location>
</feature>
<feature type="transmembrane region" description="Helical" evidence="1">
    <location>
        <begin position="85"/>
        <end position="105"/>
    </location>
</feature>
<feature type="transmembrane region" description="Helical" evidence="1">
    <location>
        <begin position="124"/>
        <end position="144"/>
    </location>
</feature>
<feature type="active site" evidence="1">
    <location>
        <position position="111"/>
    </location>
</feature>
<feature type="active site" evidence="1">
    <location>
        <position position="129"/>
    </location>
</feature>
<dbReference type="EC" id="3.4.23.36" evidence="1"/>
<dbReference type="EMBL" id="CP001186">
    <property type="protein sequence ID" value="ACK97200.1"/>
    <property type="molecule type" value="Genomic_DNA"/>
</dbReference>
<dbReference type="RefSeq" id="WP_000642180.1">
    <property type="nucleotide sequence ID" value="NC_011772.1"/>
</dbReference>
<dbReference type="SMR" id="B7IUQ3"/>
<dbReference type="GeneID" id="72450575"/>
<dbReference type="KEGG" id="bcg:BCG9842_B1247"/>
<dbReference type="HOGENOM" id="CLU_083252_3_0_9"/>
<dbReference type="UniPathway" id="UPA00665"/>
<dbReference type="Proteomes" id="UP000006744">
    <property type="component" value="Chromosome"/>
</dbReference>
<dbReference type="GO" id="GO:0005886">
    <property type="term" value="C:plasma membrane"/>
    <property type="evidence" value="ECO:0007669"/>
    <property type="project" value="UniProtKB-SubCell"/>
</dbReference>
<dbReference type="GO" id="GO:0004190">
    <property type="term" value="F:aspartic-type endopeptidase activity"/>
    <property type="evidence" value="ECO:0007669"/>
    <property type="project" value="UniProtKB-UniRule"/>
</dbReference>
<dbReference type="GO" id="GO:0006508">
    <property type="term" value="P:proteolysis"/>
    <property type="evidence" value="ECO:0007669"/>
    <property type="project" value="UniProtKB-KW"/>
</dbReference>
<dbReference type="HAMAP" id="MF_00161">
    <property type="entry name" value="LspA"/>
    <property type="match status" value="1"/>
</dbReference>
<dbReference type="InterPro" id="IPR001872">
    <property type="entry name" value="Peptidase_A8"/>
</dbReference>
<dbReference type="NCBIfam" id="TIGR00077">
    <property type="entry name" value="lspA"/>
    <property type="match status" value="1"/>
</dbReference>
<dbReference type="PANTHER" id="PTHR33695">
    <property type="entry name" value="LIPOPROTEIN SIGNAL PEPTIDASE"/>
    <property type="match status" value="1"/>
</dbReference>
<dbReference type="PANTHER" id="PTHR33695:SF1">
    <property type="entry name" value="LIPOPROTEIN SIGNAL PEPTIDASE"/>
    <property type="match status" value="1"/>
</dbReference>
<dbReference type="Pfam" id="PF01252">
    <property type="entry name" value="Peptidase_A8"/>
    <property type="match status" value="1"/>
</dbReference>
<dbReference type="PRINTS" id="PR00781">
    <property type="entry name" value="LIPOSIGPTASE"/>
</dbReference>
<dbReference type="PROSITE" id="PS00855">
    <property type="entry name" value="SPASE_II"/>
    <property type="match status" value="1"/>
</dbReference>
<evidence type="ECO:0000255" key="1">
    <source>
        <dbReference type="HAMAP-Rule" id="MF_00161"/>
    </source>
</evidence>
<name>LSPA_BACC2</name>
<keyword id="KW-0064">Aspartyl protease</keyword>
<keyword id="KW-1003">Cell membrane</keyword>
<keyword id="KW-0378">Hydrolase</keyword>
<keyword id="KW-0472">Membrane</keyword>
<keyword id="KW-0645">Protease</keyword>
<keyword id="KW-0812">Transmembrane</keyword>
<keyword id="KW-1133">Transmembrane helix</keyword>